<comment type="function">
    <text evidence="1">May act as a scaffold to regulate the recruitment and assembly of spindle midzone components. Required for the localization of AURKB and PLK1 to the spindle midzone.</text>
</comment>
<comment type="subcellular location">
    <subcellularLocation>
        <location evidence="1">Cytoplasm</location>
        <location evidence="1">Cytoskeleton</location>
        <location evidence="1">Spindle</location>
    </subcellularLocation>
    <subcellularLocation>
        <location evidence="1">Midbody</location>
    </subcellularLocation>
    <text evidence="1">During early anaphase, localizes along overlapping interpolar microtubules between the separating chromosomes. During late anaphase, localizes to the center of spindle midzone. Concentrated at the midbody during telophase.</text>
</comment>
<comment type="alternative products">
    <event type="alternative splicing"/>
    <isoform>
        <id>Q3TCJ8-1</id>
        <name>1</name>
        <sequence type="displayed"/>
    </isoform>
    <isoform>
        <id>Q3TCJ8-2</id>
        <name>2</name>
        <sequence type="described" ref="VSP_032858"/>
    </isoform>
</comment>
<comment type="similarity">
    <text evidence="6">Belongs to the CCDC69 family.</text>
</comment>
<feature type="initiator methionine" description="Removed" evidence="2">
    <location>
        <position position="1"/>
    </location>
</feature>
<feature type="chain" id="PRO_0000328963" description="Coiled-coil domain-containing protein 69">
    <location>
        <begin position="2"/>
        <end position="202"/>
    </location>
</feature>
<feature type="region of interest" description="Disordered" evidence="3">
    <location>
        <begin position="1"/>
        <end position="20"/>
    </location>
</feature>
<feature type="region of interest" description="Disordered" evidence="3">
    <location>
        <begin position="32"/>
        <end position="52"/>
    </location>
</feature>
<feature type="coiled-coil region" evidence="2">
    <location>
        <begin position="112"/>
        <end position="146"/>
    </location>
</feature>
<feature type="compositionally biased region" description="Basic residues" evidence="3">
    <location>
        <begin position="1"/>
        <end position="11"/>
    </location>
</feature>
<feature type="compositionally biased region" description="Basic and acidic residues" evidence="3">
    <location>
        <begin position="32"/>
        <end position="42"/>
    </location>
</feature>
<feature type="modified residue" description="Phosphoserine" evidence="7">
    <location>
        <position position="92"/>
    </location>
</feature>
<feature type="lipid moiety-binding region" description="N-myristoyl glycine" evidence="2">
    <location>
        <position position="2"/>
    </location>
</feature>
<feature type="splice variant" id="VSP_032858" description="In isoform 2." evidence="4 5">
    <location>
        <begin position="177"/>
        <end position="202"/>
    </location>
</feature>
<keyword id="KW-0025">Alternative splicing</keyword>
<keyword id="KW-0175">Coiled coil</keyword>
<keyword id="KW-0963">Cytoplasm</keyword>
<keyword id="KW-0206">Cytoskeleton</keyword>
<keyword id="KW-0449">Lipoprotein</keyword>
<keyword id="KW-0519">Myristate</keyword>
<keyword id="KW-0597">Phosphoprotein</keyword>
<keyword id="KW-1185">Reference proteome</keyword>
<reference key="1">
    <citation type="journal article" date="2005" name="Science">
        <title>The transcriptional landscape of the mammalian genome.</title>
        <authorList>
            <person name="Carninci P."/>
            <person name="Kasukawa T."/>
            <person name="Katayama S."/>
            <person name="Gough J."/>
            <person name="Frith M.C."/>
            <person name="Maeda N."/>
            <person name="Oyama R."/>
            <person name="Ravasi T."/>
            <person name="Lenhard B."/>
            <person name="Wells C."/>
            <person name="Kodzius R."/>
            <person name="Shimokawa K."/>
            <person name="Bajic V.B."/>
            <person name="Brenner S.E."/>
            <person name="Batalov S."/>
            <person name="Forrest A.R."/>
            <person name="Zavolan M."/>
            <person name="Davis M.J."/>
            <person name="Wilming L.G."/>
            <person name="Aidinis V."/>
            <person name="Allen J.E."/>
            <person name="Ambesi-Impiombato A."/>
            <person name="Apweiler R."/>
            <person name="Aturaliya R.N."/>
            <person name="Bailey T.L."/>
            <person name="Bansal M."/>
            <person name="Baxter L."/>
            <person name="Beisel K.W."/>
            <person name="Bersano T."/>
            <person name="Bono H."/>
            <person name="Chalk A.M."/>
            <person name="Chiu K.P."/>
            <person name="Choudhary V."/>
            <person name="Christoffels A."/>
            <person name="Clutterbuck D.R."/>
            <person name="Crowe M.L."/>
            <person name="Dalla E."/>
            <person name="Dalrymple B.P."/>
            <person name="de Bono B."/>
            <person name="Della Gatta G."/>
            <person name="di Bernardo D."/>
            <person name="Down T."/>
            <person name="Engstrom P."/>
            <person name="Fagiolini M."/>
            <person name="Faulkner G."/>
            <person name="Fletcher C.F."/>
            <person name="Fukushima T."/>
            <person name="Furuno M."/>
            <person name="Futaki S."/>
            <person name="Gariboldi M."/>
            <person name="Georgii-Hemming P."/>
            <person name="Gingeras T.R."/>
            <person name="Gojobori T."/>
            <person name="Green R.E."/>
            <person name="Gustincich S."/>
            <person name="Harbers M."/>
            <person name="Hayashi Y."/>
            <person name="Hensch T.K."/>
            <person name="Hirokawa N."/>
            <person name="Hill D."/>
            <person name="Huminiecki L."/>
            <person name="Iacono M."/>
            <person name="Ikeo K."/>
            <person name="Iwama A."/>
            <person name="Ishikawa T."/>
            <person name="Jakt M."/>
            <person name="Kanapin A."/>
            <person name="Katoh M."/>
            <person name="Kawasawa Y."/>
            <person name="Kelso J."/>
            <person name="Kitamura H."/>
            <person name="Kitano H."/>
            <person name="Kollias G."/>
            <person name="Krishnan S.P."/>
            <person name="Kruger A."/>
            <person name="Kummerfeld S.K."/>
            <person name="Kurochkin I.V."/>
            <person name="Lareau L.F."/>
            <person name="Lazarevic D."/>
            <person name="Lipovich L."/>
            <person name="Liu J."/>
            <person name="Liuni S."/>
            <person name="McWilliam S."/>
            <person name="Madan Babu M."/>
            <person name="Madera M."/>
            <person name="Marchionni L."/>
            <person name="Matsuda H."/>
            <person name="Matsuzawa S."/>
            <person name="Miki H."/>
            <person name="Mignone F."/>
            <person name="Miyake S."/>
            <person name="Morris K."/>
            <person name="Mottagui-Tabar S."/>
            <person name="Mulder N."/>
            <person name="Nakano N."/>
            <person name="Nakauchi H."/>
            <person name="Ng P."/>
            <person name="Nilsson R."/>
            <person name="Nishiguchi S."/>
            <person name="Nishikawa S."/>
            <person name="Nori F."/>
            <person name="Ohara O."/>
            <person name="Okazaki Y."/>
            <person name="Orlando V."/>
            <person name="Pang K.C."/>
            <person name="Pavan W.J."/>
            <person name="Pavesi G."/>
            <person name="Pesole G."/>
            <person name="Petrovsky N."/>
            <person name="Piazza S."/>
            <person name="Reed J."/>
            <person name="Reid J.F."/>
            <person name="Ring B.Z."/>
            <person name="Ringwald M."/>
            <person name="Rost B."/>
            <person name="Ruan Y."/>
            <person name="Salzberg S.L."/>
            <person name="Sandelin A."/>
            <person name="Schneider C."/>
            <person name="Schoenbach C."/>
            <person name="Sekiguchi K."/>
            <person name="Semple C.A."/>
            <person name="Seno S."/>
            <person name="Sessa L."/>
            <person name="Sheng Y."/>
            <person name="Shibata Y."/>
            <person name="Shimada H."/>
            <person name="Shimada K."/>
            <person name="Silva D."/>
            <person name="Sinclair B."/>
            <person name="Sperling S."/>
            <person name="Stupka E."/>
            <person name="Sugiura K."/>
            <person name="Sultana R."/>
            <person name="Takenaka Y."/>
            <person name="Taki K."/>
            <person name="Tammoja K."/>
            <person name="Tan S.L."/>
            <person name="Tang S."/>
            <person name="Taylor M.S."/>
            <person name="Tegner J."/>
            <person name="Teichmann S.A."/>
            <person name="Ueda H.R."/>
            <person name="van Nimwegen E."/>
            <person name="Verardo R."/>
            <person name="Wei C.L."/>
            <person name="Yagi K."/>
            <person name="Yamanishi H."/>
            <person name="Zabarovsky E."/>
            <person name="Zhu S."/>
            <person name="Zimmer A."/>
            <person name="Hide W."/>
            <person name="Bult C."/>
            <person name="Grimmond S.M."/>
            <person name="Teasdale R.D."/>
            <person name="Liu E.T."/>
            <person name="Brusic V."/>
            <person name="Quackenbush J."/>
            <person name="Wahlestedt C."/>
            <person name="Mattick J.S."/>
            <person name="Hume D.A."/>
            <person name="Kai C."/>
            <person name="Sasaki D."/>
            <person name="Tomaru Y."/>
            <person name="Fukuda S."/>
            <person name="Kanamori-Katayama M."/>
            <person name="Suzuki M."/>
            <person name="Aoki J."/>
            <person name="Arakawa T."/>
            <person name="Iida J."/>
            <person name="Imamura K."/>
            <person name="Itoh M."/>
            <person name="Kato T."/>
            <person name="Kawaji H."/>
            <person name="Kawagashira N."/>
            <person name="Kawashima T."/>
            <person name="Kojima M."/>
            <person name="Kondo S."/>
            <person name="Konno H."/>
            <person name="Nakano K."/>
            <person name="Ninomiya N."/>
            <person name="Nishio T."/>
            <person name="Okada M."/>
            <person name="Plessy C."/>
            <person name="Shibata K."/>
            <person name="Shiraki T."/>
            <person name="Suzuki S."/>
            <person name="Tagami M."/>
            <person name="Waki K."/>
            <person name="Watahiki A."/>
            <person name="Okamura-Oho Y."/>
            <person name="Suzuki H."/>
            <person name="Kawai J."/>
            <person name="Hayashizaki Y."/>
        </authorList>
    </citation>
    <scope>NUCLEOTIDE SEQUENCE [LARGE SCALE MRNA] (ISOFORMS 1 AND 2)</scope>
    <source>
        <strain>C57BL/6J</strain>
        <strain>NOD</strain>
        <tissue>Egg</tissue>
        <tissue>Thymus</tissue>
    </source>
</reference>
<reference key="2">
    <citation type="journal article" date="2004" name="Genome Res.">
        <title>The status, quality, and expansion of the NIH full-length cDNA project: the Mammalian Gene Collection (MGC).</title>
        <authorList>
            <consortium name="The MGC Project Team"/>
        </authorList>
    </citation>
    <scope>NUCLEOTIDE SEQUENCE [LARGE SCALE MRNA] (ISOFORM 2)</scope>
    <source>
        <strain>C57BL/6J</strain>
        <tissue>Egg</tissue>
    </source>
</reference>
<reference key="3">
    <citation type="journal article" date="2010" name="Cell">
        <title>A tissue-specific atlas of mouse protein phosphorylation and expression.</title>
        <authorList>
            <person name="Huttlin E.L."/>
            <person name="Jedrychowski M.P."/>
            <person name="Elias J.E."/>
            <person name="Goswami T."/>
            <person name="Rad R."/>
            <person name="Beausoleil S.A."/>
            <person name="Villen J."/>
            <person name="Haas W."/>
            <person name="Sowa M.E."/>
            <person name="Gygi S.P."/>
        </authorList>
    </citation>
    <scope>PHOSPHORYLATION [LARGE SCALE ANALYSIS] AT SER-92</scope>
    <scope>IDENTIFICATION BY MASS SPECTROMETRY [LARGE SCALE ANALYSIS]</scope>
    <source>
        <tissue>Brown adipose tissue</tissue>
        <tissue>Heart</tissue>
    </source>
</reference>
<organism>
    <name type="scientific">Mus musculus</name>
    <name type="common">Mouse</name>
    <dbReference type="NCBI Taxonomy" id="10090"/>
    <lineage>
        <taxon>Eukaryota</taxon>
        <taxon>Metazoa</taxon>
        <taxon>Chordata</taxon>
        <taxon>Craniata</taxon>
        <taxon>Vertebrata</taxon>
        <taxon>Euteleostomi</taxon>
        <taxon>Mammalia</taxon>
        <taxon>Eutheria</taxon>
        <taxon>Euarchontoglires</taxon>
        <taxon>Glires</taxon>
        <taxon>Rodentia</taxon>
        <taxon>Myomorpha</taxon>
        <taxon>Muroidea</taxon>
        <taxon>Muridae</taxon>
        <taxon>Murinae</taxon>
        <taxon>Mus</taxon>
        <taxon>Mus</taxon>
    </lineage>
</organism>
<name>CCD69_MOUSE</name>
<protein>
    <recommendedName>
        <fullName>Coiled-coil domain-containing protein 69</fullName>
    </recommendedName>
</protein>
<gene>
    <name type="primary">Ccdc69</name>
    <name type="synonym">D11Ertd461e</name>
</gene>
<proteinExistence type="evidence at protein level"/>
<evidence type="ECO:0000250" key="1">
    <source>
        <dbReference type="UniProtKB" id="A6NI79"/>
    </source>
</evidence>
<evidence type="ECO:0000255" key="2"/>
<evidence type="ECO:0000256" key="3">
    <source>
        <dbReference type="SAM" id="MobiDB-lite"/>
    </source>
</evidence>
<evidence type="ECO:0000303" key="4">
    <source>
    </source>
</evidence>
<evidence type="ECO:0000303" key="5">
    <source>
    </source>
</evidence>
<evidence type="ECO:0000305" key="6"/>
<evidence type="ECO:0007744" key="7">
    <source>
    </source>
</evidence>
<sequence length="202" mass="23296">MGCRQSRHSRGKRAEKVEETQTELLEALDKEGRILEGRHEEAGQVPQTSNAQEKVSLSDCIQEAKASLQNTCASHVSPQEATQAKMNKVDGSILSRLYRNHIQDYGSPGPFWEQELESLHHVIEMKNERIHELEKQLFLLEMLKEKNLILALKNTTLRQEVEDLQFQAGNRLTMSRQLRKDLLQDLEKESQNGHCCSRRRSH</sequence>
<accession>Q3TCJ8</accession>
<accession>Q8C515</accession>
<dbReference type="EMBL" id="AK079810">
    <property type="protein sequence ID" value="BAC37752.1"/>
    <property type="molecule type" value="mRNA"/>
</dbReference>
<dbReference type="EMBL" id="AK135942">
    <property type="protein sequence ID" value="BAE22734.1"/>
    <property type="molecule type" value="mRNA"/>
</dbReference>
<dbReference type="EMBL" id="AK170686">
    <property type="protein sequence ID" value="BAE41958.1"/>
    <property type="molecule type" value="mRNA"/>
</dbReference>
<dbReference type="EMBL" id="BC096763">
    <property type="protein sequence ID" value="AAH96763.1"/>
    <property type="molecule type" value="mRNA"/>
</dbReference>
<dbReference type="CCDS" id="CCDS36155.1">
    <molecule id="Q3TCJ8-1"/>
</dbReference>
<dbReference type="RefSeq" id="NP_803422.2">
    <molecule id="Q3TCJ8-1"/>
    <property type="nucleotide sequence ID" value="NM_177471.4"/>
</dbReference>
<dbReference type="RefSeq" id="XP_011247427.1">
    <molecule id="Q3TCJ8-1"/>
    <property type="nucleotide sequence ID" value="XM_011249125.2"/>
</dbReference>
<dbReference type="RefSeq" id="XP_036012721.1">
    <molecule id="Q3TCJ8-1"/>
    <property type="nucleotide sequence ID" value="XM_036156828.1"/>
</dbReference>
<dbReference type="SMR" id="Q3TCJ8"/>
<dbReference type="FunCoup" id="Q3TCJ8">
    <property type="interactions" value="276"/>
</dbReference>
<dbReference type="STRING" id="10090.ENSMUSP00000054840"/>
<dbReference type="iPTMnet" id="Q3TCJ8"/>
<dbReference type="PhosphoSitePlus" id="Q3TCJ8"/>
<dbReference type="SwissPalm" id="Q3TCJ8"/>
<dbReference type="jPOST" id="Q3TCJ8"/>
<dbReference type="PaxDb" id="10090-ENSMUSP00000054840"/>
<dbReference type="ProteomicsDB" id="265594">
    <molecule id="Q3TCJ8-1"/>
</dbReference>
<dbReference type="ProteomicsDB" id="265595">
    <molecule id="Q3TCJ8-2"/>
</dbReference>
<dbReference type="Antibodypedia" id="28179">
    <property type="antibodies" value="142 antibodies from 23 providers"/>
</dbReference>
<dbReference type="Ensembl" id="ENSMUST00000055040.13">
    <molecule id="Q3TCJ8-1"/>
    <property type="protein sequence ID" value="ENSMUSP00000054840.7"/>
    <property type="gene ID" value="ENSMUSG00000049588.14"/>
</dbReference>
<dbReference type="Ensembl" id="ENSMUST00000108880.2">
    <molecule id="Q3TCJ8-2"/>
    <property type="protein sequence ID" value="ENSMUSP00000104508.2"/>
    <property type="gene ID" value="ENSMUSG00000049588.14"/>
</dbReference>
<dbReference type="GeneID" id="52570"/>
<dbReference type="KEGG" id="mmu:52570"/>
<dbReference type="UCSC" id="uc007iyu.1">
    <molecule id="Q3TCJ8-1"/>
    <property type="organism name" value="mouse"/>
</dbReference>
<dbReference type="AGR" id="MGI:1196234"/>
<dbReference type="CTD" id="26112"/>
<dbReference type="MGI" id="MGI:1196234">
    <property type="gene designation" value="Ccdc69"/>
</dbReference>
<dbReference type="VEuPathDB" id="HostDB:ENSMUSG00000049588"/>
<dbReference type="eggNOG" id="ENOG502RYPP">
    <property type="taxonomic scope" value="Eukaryota"/>
</dbReference>
<dbReference type="GeneTree" id="ENSGT00950000183026"/>
<dbReference type="HOGENOM" id="CLU_1329037_0_0_1"/>
<dbReference type="InParanoid" id="Q3TCJ8"/>
<dbReference type="OMA" id="ESQNGHC"/>
<dbReference type="OrthoDB" id="10038993at2759"/>
<dbReference type="PhylomeDB" id="Q3TCJ8"/>
<dbReference type="BioGRID-ORCS" id="52570">
    <property type="hits" value="2 hits in 76 CRISPR screens"/>
</dbReference>
<dbReference type="ChiTaRS" id="Ccdc69">
    <property type="organism name" value="mouse"/>
</dbReference>
<dbReference type="PRO" id="PR:Q3TCJ8"/>
<dbReference type="Proteomes" id="UP000000589">
    <property type="component" value="Chromosome 11"/>
</dbReference>
<dbReference type="RNAct" id="Q3TCJ8">
    <property type="molecule type" value="protein"/>
</dbReference>
<dbReference type="Bgee" id="ENSMUSG00000049588">
    <property type="expression patterns" value="Expressed in secondary oocyte and 193 other cell types or tissues"/>
</dbReference>
<dbReference type="GO" id="GO:0005737">
    <property type="term" value="C:cytoplasm"/>
    <property type="evidence" value="ECO:0007669"/>
    <property type="project" value="UniProtKB-KW"/>
</dbReference>
<dbReference type="GO" id="GO:0030496">
    <property type="term" value="C:midbody"/>
    <property type="evidence" value="ECO:0007669"/>
    <property type="project" value="UniProtKB-SubCell"/>
</dbReference>
<dbReference type="GO" id="GO:0051233">
    <property type="term" value="C:spindle midzone"/>
    <property type="evidence" value="ECO:0000250"/>
    <property type="project" value="UniProtKB"/>
</dbReference>
<dbReference type="GO" id="GO:0051255">
    <property type="term" value="P:spindle midzone assembly"/>
    <property type="evidence" value="ECO:0000250"/>
    <property type="project" value="UniProtKB"/>
</dbReference>
<dbReference type="InterPro" id="IPR051293">
    <property type="entry name" value="MTUS1/CCDC69"/>
</dbReference>
<dbReference type="PANTHER" id="PTHR24200:SF6">
    <property type="entry name" value="COILED-COIL DOMAIN-CONTAINING PROTEIN 69"/>
    <property type="match status" value="1"/>
</dbReference>
<dbReference type="PANTHER" id="PTHR24200">
    <property type="entry name" value="TOUCAN, ISOFORM A"/>
    <property type="match status" value="1"/>
</dbReference>